<proteinExistence type="evidence at protein level"/>
<accession>Q8VZ22</accession>
<accession>A3RCC6</accession>
<accession>A7Y5W1</accession>
<accession>O81901</accession>
<protein>
    <recommendedName>
        <fullName>Transcription factor bHLH103</fullName>
    </recommendedName>
    <alternativeName>
        <fullName>Basic helix-loop-helix protein 103</fullName>
        <shortName>AtbHLH103</shortName>
        <shortName>bHLH 103</shortName>
    </alternativeName>
    <alternativeName>
        <fullName>Transcription factor EN 62</fullName>
    </alternativeName>
    <alternativeName>
        <fullName>bHLH transcription factor bHLH103</fullName>
    </alternativeName>
</protein>
<keyword id="KW-0238">DNA-binding</keyword>
<keyword id="KW-0539">Nucleus</keyword>
<keyword id="KW-1185">Reference proteome</keyword>
<keyword id="KW-0804">Transcription</keyword>
<keyword id="KW-0805">Transcription regulation</keyword>
<dbReference type="EMBL" id="EF182720">
    <property type="protein sequence ID" value="ABN05289.1"/>
    <property type="molecule type" value="Genomic_DNA"/>
</dbReference>
<dbReference type="EMBL" id="EF637083">
    <property type="protein sequence ID" value="ABV21210.1"/>
    <property type="molecule type" value="Genomic_DNA"/>
</dbReference>
<dbReference type="EMBL" id="AL031187">
    <property type="protein sequence ID" value="CAA20199.1"/>
    <property type="status" value="ALT_SEQ"/>
    <property type="molecule type" value="Genomic_DNA"/>
</dbReference>
<dbReference type="EMBL" id="AL161554">
    <property type="protein sequence ID" value="CAB79133.1"/>
    <property type="status" value="ALT_SEQ"/>
    <property type="molecule type" value="Genomic_DNA"/>
</dbReference>
<dbReference type="EMBL" id="CP002687">
    <property type="protein sequence ID" value="AEE84443.1"/>
    <property type="molecule type" value="Genomic_DNA"/>
</dbReference>
<dbReference type="EMBL" id="AY065362">
    <property type="protein sequence ID" value="AAL38803.1"/>
    <property type="molecule type" value="mRNA"/>
</dbReference>
<dbReference type="EMBL" id="AY122937">
    <property type="protein sequence ID" value="AAM67470.1"/>
    <property type="molecule type" value="mRNA"/>
</dbReference>
<dbReference type="PIR" id="T05176">
    <property type="entry name" value="T05176"/>
</dbReference>
<dbReference type="RefSeq" id="NP_193865.2">
    <property type="nucleotide sequence ID" value="NM_118254.4"/>
</dbReference>
<dbReference type="SMR" id="Q8VZ22"/>
<dbReference type="BioGRID" id="13175">
    <property type="interactions" value="10"/>
</dbReference>
<dbReference type="IntAct" id="Q8VZ22">
    <property type="interactions" value="10"/>
</dbReference>
<dbReference type="STRING" id="3702.Q8VZ22"/>
<dbReference type="PaxDb" id="3702-AT4G21340.1"/>
<dbReference type="EnsemblPlants" id="AT4G21340.1">
    <property type="protein sequence ID" value="AT4G21340.1"/>
    <property type="gene ID" value="AT4G21340"/>
</dbReference>
<dbReference type="GeneID" id="827884"/>
<dbReference type="Gramene" id="AT4G21340.1">
    <property type="protein sequence ID" value="AT4G21340.1"/>
    <property type="gene ID" value="AT4G21340"/>
</dbReference>
<dbReference type="KEGG" id="ath:AT4G21340"/>
<dbReference type="Araport" id="AT4G21340"/>
<dbReference type="TAIR" id="AT4G21340">
    <property type="gene designation" value="B70"/>
</dbReference>
<dbReference type="eggNOG" id="ENOG502QRNH">
    <property type="taxonomic scope" value="Eukaryota"/>
</dbReference>
<dbReference type="HOGENOM" id="CLU_083455_0_0_1"/>
<dbReference type="InParanoid" id="Q8VZ22"/>
<dbReference type="OMA" id="WWSSSNG"/>
<dbReference type="PhylomeDB" id="Q8VZ22"/>
<dbReference type="PRO" id="PR:Q8VZ22"/>
<dbReference type="Proteomes" id="UP000006548">
    <property type="component" value="Chromosome 4"/>
</dbReference>
<dbReference type="ExpressionAtlas" id="Q8VZ22">
    <property type="expression patterns" value="baseline and differential"/>
</dbReference>
<dbReference type="GO" id="GO:0005634">
    <property type="term" value="C:nucleus"/>
    <property type="evidence" value="ECO:0007669"/>
    <property type="project" value="UniProtKB-SubCell"/>
</dbReference>
<dbReference type="GO" id="GO:0003677">
    <property type="term" value="F:DNA binding"/>
    <property type="evidence" value="ECO:0007669"/>
    <property type="project" value="UniProtKB-KW"/>
</dbReference>
<dbReference type="GO" id="GO:0003700">
    <property type="term" value="F:DNA-binding transcription factor activity"/>
    <property type="evidence" value="ECO:0000250"/>
    <property type="project" value="TAIR"/>
</dbReference>
<dbReference type="GO" id="GO:0046983">
    <property type="term" value="F:protein dimerization activity"/>
    <property type="evidence" value="ECO:0007669"/>
    <property type="project" value="InterPro"/>
</dbReference>
<dbReference type="CDD" id="cd11393">
    <property type="entry name" value="bHLH_AtbHLH_like"/>
    <property type="match status" value="1"/>
</dbReference>
<dbReference type="FunFam" id="4.10.280.10:FF:000075">
    <property type="entry name" value="Transcription factor bHLH113 family"/>
    <property type="match status" value="1"/>
</dbReference>
<dbReference type="Gene3D" id="4.10.280.10">
    <property type="entry name" value="Helix-loop-helix DNA-binding domain"/>
    <property type="match status" value="1"/>
</dbReference>
<dbReference type="InterPro" id="IPR045239">
    <property type="entry name" value="bHLH95_bHLH"/>
</dbReference>
<dbReference type="InterPro" id="IPR011598">
    <property type="entry name" value="bHLH_dom"/>
</dbReference>
<dbReference type="InterPro" id="IPR036638">
    <property type="entry name" value="HLH_DNA-bd_sf"/>
</dbReference>
<dbReference type="InterPro" id="IPR045843">
    <property type="entry name" value="IND-like"/>
</dbReference>
<dbReference type="PANTHER" id="PTHR16223:SF360">
    <property type="entry name" value="TRANSCRIPTION FACTOR BHLH103"/>
    <property type="match status" value="1"/>
</dbReference>
<dbReference type="PANTHER" id="PTHR16223">
    <property type="entry name" value="TRANSCRIPTION FACTOR BHLH83-RELATED"/>
    <property type="match status" value="1"/>
</dbReference>
<dbReference type="SMART" id="SM00353">
    <property type="entry name" value="HLH"/>
    <property type="match status" value="1"/>
</dbReference>
<dbReference type="SUPFAM" id="SSF47459">
    <property type="entry name" value="HLH, helix-loop-helix DNA-binding domain"/>
    <property type="match status" value="1"/>
</dbReference>
<dbReference type="PROSITE" id="PS50888">
    <property type="entry name" value="BHLH"/>
    <property type="match status" value="1"/>
</dbReference>
<sequence>MTEEFDTTGVCTGTWWSSSNGMFSGCSLPRSAEIVVDFGEIEWQNIDTLDAKTYNENYLSTSTFLGNANLDTTSQIYVSSPSNIHEEERYNQINSFLEGLFDSSEQLLVPNCPKPELFESFHFFDDVFPNESRMISVFDHQKPKEDMQACKSLTTCKRASEKSGELEDIESSQPLKRPRLETPSHFPSFKVRKEKLGDRITALQQLVSPFGKTDTASVLHDAIDYIKFLQEQITEKVSTSPHLNSIGSGEQKQWSDKSSNNTHNQNCSPRQDLRSRGLCLMPISSTFSTPPQHLDTSSLWN</sequence>
<feature type="chain" id="PRO_0000358791" description="Transcription factor bHLH103">
    <location>
        <begin position="1"/>
        <end position="301"/>
    </location>
</feature>
<feature type="domain" description="KRAB">
    <location>
        <begin position="29"/>
        <end position="106"/>
    </location>
</feature>
<feature type="domain" description="bHLH" evidence="1">
    <location>
        <begin position="180"/>
        <end position="229"/>
    </location>
</feature>
<feature type="region of interest" description="Disordered" evidence="2">
    <location>
        <begin position="161"/>
        <end position="184"/>
    </location>
</feature>
<feature type="region of interest" description="Disordered" evidence="2">
    <location>
        <begin position="239"/>
        <end position="272"/>
    </location>
</feature>
<feature type="compositionally biased region" description="Polar residues" evidence="2">
    <location>
        <begin position="239"/>
        <end position="269"/>
    </location>
</feature>
<feature type="sequence variant" description="In strain: cv. Cvi-0.">
    <original>Q</original>
    <variation>E</variation>
    <location>
        <position position="75"/>
    </location>
</feature>
<feature type="sequence variant" description="In strain: cv. C24.">
    <original>I</original>
    <variation>V</variation>
    <location>
        <position position="84"/>
    </location>
</feature>
<feature type="sequence variant" description="In strain: cv. C24.">
    <original>K</original>
    <variation>E</variation>
    <location>
        <position position="257"/>
    </location>
</feature>
<feature type="sequence variant" description="In strain: cv. C24.">
    <original>N</original>
    <variation>D</variation>
    <location>
        <position position="266"/>
    </location>
</feature>
<feature type="sequence variant" description="In strain: cv. Cvi-0.">
    <original>S</original>
    <variation>T</variation>
    <location>
        <position position="297"/>
    </location>
</feature>
<feature type="sequence variant" description="In strain: cv. C24.">
    <original>L</original>
    <variation>F</variation>
    <location>
        <position position="299"/>
    </location>
</feature>
<evidence type="ECO:0000255" key="1">
    <source>
        <dbReference type="PROSITE-ProRule" id="PRU00981"/>
    </source>
</evidence>
<evidence type="ECO:0000256" key="2">
    <source>
        <dbReference type="SAM" id="MobiDB-lite"/>
    </source>
</evidence>
<evidence type="ECO:0000269" key="3">
    <source>
    </source>
</evidence>
<evidence type="ECO:0000305" key="4"/>
<comment type="subunit">
    <text evidence="4">Homodimer.</text>
</comment>
<comment type="interaction">
    <interactant intactId="EBI-15195445">
        <id>Q8VZ22</id>
    </interactant>
    <interactant intactId="EBI-15195499">
        <id>Q9M128</id>
        <label>BHLH57</label>
    </interactant>
    <organismsDiffer>false</organismsDiffer>
    <experiments>3</experiments>
</comment>
<comment type="subcellular location">
    <subcellularLocation>
        <location evidence="1">Nucleus</location>
    </subcellularLocation>
</comment>
<comment type="tissue specificity">
    <text evidence="3">Mature root endodermis.</text>
</comment>
<comment type="sequence caution" evidence="4">
    <conflict type="erroneous gene model prediction">
        <sequence resource="EMBL-CDS" id="CAA20199"/>
    </conflict>
</comment>
<comment type="sequence caution" evidence="4">
    <conflict type="erroneous gene model prediction">
        <sequence resource="EMBL-CDS" id="CAB79133"/>
    </conflict>
</comment>
<reference key="1">
    <citation type="journal article" date="2007" name="Plant Cell">
        <title>S locus genes and the evolution of self-fertility in Arabidopsis thaliana.</title>
        <authorList>
            <person name="Sherman-Broyles S."/>
            <person name="Boggs N."/>
            <person name="Farkas A."/>
            <person name="Liu P."/>
            <person name="Vrebalov J."/>
            <person name="Nasrallah M.E."/>
            <person name="Nasrallah J.B."/>
        </authorList>
    </citation>
    <scope>NUCLEOTIDE SEQUENCE [GENOMIC DNA]</scope>
    <source>
        <strain>cv. C24</strain>
    </source>
</reference>
<reference key="2">
    <citation type="journal article" date="2007" name="Science">
        <title>The evolution of selfing in Arabidopsis thaliana.</title>
        <authorList>
            <person name="Tang C."/>
            <person name="Toomajian C."/>
            <person name="Sherman-Broyles S."/>
            <person name="Plagnol V."/>
            <person name="Guo Y.-L."/>
            <person name="Hu T.T."/>
            <person name="Clark R.M."/>
            <person name="Nasrallah J.B."/>
            <person name="Weigel D."/>
            <person name="Nordborg M."/>
        </authorList>
    </citation>
    <scope>NUCLEOTIDE SEQUENCE [GENOMIC DNA]</scope>
    <source>
        <strain>cv. Cvi-0</strain>
    </source>
</reference>
<reference key="3">
    <citation type="journal article" date="1999" name="Nature">
        <title>Sequence and analysis of chromosome 4 of the plant Arabidopsis thaliana.</title>
        <authorList>
            <person name="Mayer K.F.X."/>
            <person name="Schueller C."/>
            <person name="Wambutt R."/>
            <person name="Murphy G."/>
            <person name="Volckaert G."/>
            <person name="Pohl T."/>
            <person name="Duesterhoeft A."/>
            <person name="Stiekema W."/>
            <person name="Entian K.-D."/>
            <person name="Terryn N."/>
            <person name="Harris B."/>
            <person name="Ansorge W."/>
            <person name="Brandt P."/>
            <person name="Grivell L.A."/>
            <person name="Rieger M."/>
            <person name="Weichselgartner M."/>
            <person name="de Simone V."/>
            <person name="Obermaier B."/>
            <person name="Mache R."/>
            <person name="Mueller M."/>
            <person name="Kreis M."/>
            <person name="Delseny M."/>
            <person name="Puigdomenech P."/>
            <person name="Watson M."/>
            <person name="Schmidtheini T."/>
            <person name="Reichert B."/>
            <person name="Portetelle D."/>
            <person name="Perez-Alonso M."/>
            <person name="Boutry M."/>
            <person name="Bancroft I."/>
            <person name="Vos P."/>
            <person name="Hoheisel J."/>
            <person name="Zimmermann W."/>
            <person name="Wedler H."/>
            <person name="Ridley P."/>
            <person name="Langham S.-A."/>
            <person name="McCullagh B."/>
            <person name="Bilham L."/>
            <person name="Robben J."/>
            <person name="van der Schueren J."/>
            <person name="Grymonprez B."/>
            <person name="Chuang Y.-J."/>
            <person name="Vandenbussche F."/>
            <person name="Braeken M."/>
            <person name="Weltjens I."/>
            <person name="Voet M."/>
            <person name="Bastiaens I."/>
            <person name="Aert R."/>
            <person name="Defoor E."/>
            <person name="Weitzenegger T."/>
            <person name="Bothe G."/>
            <person name="Ramsperger U."/>
            <person name="Hilbert H."/>
            <person name="Braun M."/>
            <person name="Holzer E."/>
            <person name="Brandt A."/>
            <person name="Peters S."/>
            <person name="van Staveren M."/>
            <person name="Dirkse W."/>
            <person name="Mooijman P."/>
            <person name="Klein Lankhorst R."/>
            <person name="Rose M."/>
            <person name="Hauf J."/>
            <person name="Koetter P."/>
            <person name="Berneiser S."/>
            <person name="Hempel S."/>
            <person name="Feldpausch M."/>
            <person name="Lamberth S."/>
            <person name="Van den Daele H."/>
            <person name="De Keyser A."/>
            <person name="Buysshaert C."/>
            <person name="Gielen J."/>
            <person name="Villarroel R."/>
            <person name="De Clercq R."/>
            <person name="van Montagu M."/>
            <person name="Rogers J."/>
            <person name="Cronin A."/>
            <person name="Quail M.A."/>
            <person name="Bray-Allen S."/>
            <person name="Clark L."/>
            <person name="Doggett J."/>
            <person name="Hall S."/>
            <person name="Kay M."/>
            <person name="Lennard N."/>
            <person name="McLay K."/>
            <person name="Mayes R."/>
            <person name="Pettett A."/>
            <person name="Rajandream M.A."/>
            <person name="Lyne M."/>
            <person name="Benes V."/>
            <person name="Rechmann S."/>
            <person name="Borkova D."/>
            <person name="Bloecker H."/>
            <person name="Scharfe M."/>
            <person name="Grimm M."/>
            <person name="Loehnert T.-H."/>
            <person name="Dose S."/>
            <person name="de Haan M."/>
            <person name="Maarse A.C."/>
            <person name="Schaefer M."/>
            <person name="Mueller-Auer S."/>
            <person name="Gabel C."/>
            <person name="Fuchs M."/>
            <person name="Fartmann B."/>
            <person name="Granderath K."/>
            <person name="Dauner D."/>
            <person name="Herzl A."/>
            <person name="Neumann S."/>
            <person name="Argiriou A."/>
            <person name="Vitale D."/>
            <person name="Liguori R."/>
            <person name="Piravandi E."/>
            <person name="Massenet O."/>
            <person name="Quigley F."/>
            <person name="Clabauld G."/>
            <person name="Muendlein A."/>
            <person name="Felber R."/>
            <person name="Schnabl S."/>
            <person name="Hiller R."/>
            <person name="Schmidt W."/>
            <person name="Lecharny A."/>
            <person name="Aubourg S."/>
            <person name="Chefdor F."/>
            <person name="Cooke R."/>
            <person name="Berger C."/>
            <person name="Monfort A."/>
            <person name="Casacuberta E."/>
            <person name="Gibbons T."/>
            <person name="Weber N."/>
            <person name="Vandenbol M."/>
            <person name="Bargues M."/>
            <person name="Terol J."/>
            <person name="Torres A."/>
            <person name="Perez-Perez A."/>
            <person name="Purnelle B."/>
            <person name="Bent E."/>
            <person name="Johnson S."/>
            <person name="Tacon D."/>
            <person name="Jesse T."/>
            <person name="Heijnen L."/>
            <person name="Schwarz S."/>
            <person name="Scholler P."/>
            <person name="Heber S."/>
            <person name="Francs P."/>
            <person name="Bielke C."/>
            <person name="Frishman D."/>
            <person name="Haase D."/>
            <person name="Lemcke K."/>
            <person name="Mewes H.-W."/>
            <person name="Stocker S."/>
            <person name="Zaccaria P."/>
            <person name="Bevan M."/>
            <person name="Wilson R.K."/>
            <person name="de la Bastide M."/>
            <person name="Habermann K."/>
            <person name="Parnell L."/>
            <person name="Dedhia N."/>
            <person name="Gnoj L."/>
            <person name="Schutz K."/>
            <person name="Huang E."/>
            <person name="Spiegel L."/>
            <person name="Sekhon M."/>
            <person name="Murray J."/>
            <person name="Sheet P."/>
            <person name="Cordes M."/>
            <person name="Abu-Threideh J."/>
            <person name="Stoneking T."/>
            <person name="Kalicki J."/>
            <person name="Graves T."/>
            <person name="Harmon G."/>
            <person name="Edwards J."/>
            <person name="Latreille P."/>
            <person name="Courtney L."/>
            <person name="Cloud J."/>
            <person name="Abbott A."/>
            <person name="Scott K."/>
            <person name="Johnson D."/>
            <person name="Minx P."/>
            <person name="Bentley D."/>
            <person name="Fulton B."/>
            <person name="Miller N."/>
            <person name="Greco T."/>
            <person name="Kemp K."/>
            <person name="Kramer J."/>
            <person name="Fulton L."/>
            <person name="Mardis E."/>
            <person name="Dante M."/>
            <person name="Pepin K."/>
            <person name="Hillier L.W."/>
            <person name="Nelson J."/>
            <person name="Spieth J."/>
            <person name="Ryan E."/>
            <person name="Andrews S."/>
            <person name="Geisel C."/>
            <person name="Layman D."/>
            <person name="Du H."/>
            <person name="Ali J."/>
            <person name="Berghoff A."/>
            <person name="Jones K."/>
            <person name="Drone K."/>
            <person name="Cotton M."/>
            <person name="Joshu C."/>
            <person name="Antonoiu B."/>
            <person name="Zidanic M."/>
            <person name="Strong C."/>
            <person name="Sun H."/>
            <person name="Lamar B."/>
            <person name="Yordan C."/>
            <person name="Ma P."/>
            <person name="Zhong J."/>
            <person name="Preston R."/>
            <person name="Vil D."/>
            <person name="Shekher M."/>
            <person name="Matero A."/>
            <person name="Shah R."/>
            <person name="Swaby I.K."/>
            <person name="O'Shaughnessy A."/>
            <person name="Rodriguez M."/>
            <person name="Hoffman J."/>
            <person name="Till S."/>
            <person name="Granat S."/>
            <person name="Shohdy N."/>
            <person name="Hasegawa A."/>
            <person name="Hameed A."/>
            <person name="Lodhi M."/>
            <person name="Johnson A."/>
            <person name="Chen E."/>
            <person name="Marra M.A."/>
            <person name="Martienssen R."/>
            <person name="McCombie W.R."/>
        </authorList>
    </citation>
    <scope>NUCLEOTIDE SEQUENCE [LARGE SCALE GENOMIC DNA]</scope>
    <source>
        <strain>cv. Columbia</strain>
    </source>
</reference>
<reference key="4">
    <citation type="journal article" date="2017" name="Plant J.">
        <title>Araport11: a complete reannotation of the Arabidopsis thaliana reference genome.</title>
        <authorList>
            <person name="Cheng C.Y."/>
            <person name="Krishnakumar V."/>
            <person name="Chan A.P."/>
            <person name="Thibaud-Nissen F."/>
            <person name="Schobel S."/>
            <person name="Town C.D."/>
        </authorList>
    </citation>
    <scope>GENOME REANNOTATION</scope>
    <source>
        <strain>cv. Columbia</strain>
    </source>
</reference>
<reference key="5">
    <citation type="journal article" date="2003" name="Science">
        <title>Empirical analysis of transcriptional activity in the Arabidopsis genome.</title>
        <authorList>
            <person name="Yamada K."/>
            <person name="Lim J."/>
            <person name="Dale J.M."/>
            <person name="Chen H."/>
            <person name="Shinn P."/>
            <person name="Palm C.J."/>
            <person name="Southwick A.M."/>
            <person name="Wu H.C."/>
            <person name="Kim C.J."/>
            <person name="Nguyen M."/>
            <person name="Pham P.K."/>
            <person name="Cheuk R.F."/>
            <person name="Karlin-Newmann G."/>
            <person name="Liu S.X."/>
            <person name="Lam B."/>
            <person name="Sakano H."/>
            <person name="Wu T."/>
            <person name="Yu G."/>
            <person name="Miranda M."/>
            <person name="Quach H.L."/>
            <person name="Tripp M."/>
            <person name="Chang C.H."/>
            <person name="Lee J.M."/>
            <person name="Toriumi M.J."/>
            <person name="Chan M.M."/>
            <person name="Tang C.C."/>
            <person name="Onodera C.S."/>
            <person name="Deng J.M."/>
            <person name="Akiyama K."/>
            <person name="Ansari Y."/>
            <person name="Arakawa T."/>
            <person name="Banh J."/>
            <person name="Banno F."/>
            <person name="Bowser L."/>
            <person name="Brooks S.Y."/>
            <person name="Carninci P."/>
            <person name="Chao Q."/>
            <person name="Choy N."/>
            <person name="Enju A."/>
            <person name="Goldsmith A.D."/>
            <person name="Gurjal M."/>
            <person name="Hansen N.F."/>
            <person name="Hayashizaki Y."/>
            <person name="Johnson-Hopson C."/>
            <person name="Hsuan V.W."/>
            <person name="Iida K."/>
            <person name="Karnes M."/>
            <person name="Khan S."/>
            <person name="Koesema E."/>
            <person name="Ishida J."/>
            <person name="Jiang P.X."/>
            <person name="Jones T."/>
            <person name="Kawai J."/>
            <person name="Kamiya A."/>
            <person name="Meyers C."/>
            <person name="Nakajima M."/>
            <person name="Narusaka M."/>
            <person name="Seki M."/>
            <person name="Sakurai T."/>
            <person name="Satou M."/>
            <person name="Tamse R."/>
            <person name="Vaysberg M."/>
            <person name="Wallender E.K."/>
            <person name="Wong C."/>
            <person name="Yamamura Y."/>
            <person name="Yuan S."/>
            <person name="Shinozaki K."/>
            <person name="Davis R.W."/>
            <person name="Theologis A."/>
            <person name="Ecker J.R."/>
        </authorList>
    </citation>
    <scope>NUCLEOTIDE SEQUENCE [LARGE SCALE MRNA]</scope>
    <source>
        <strain>cv. Columbia</strain>
    </source>
</reference>
<reference key="6">
    <citation type="journal article" date="2003" name="Mol. Biol. Evol.">
        <title>The basic helix-loop-helix transcription factor family in plants: a genome-wide study of protein structure and functional diversity.</title>
        <authorList>
            <person name="Heim M.A."/>
            <person name="Jakoby M."/>
            <person name="Werber M."/>
            <person name="Martin C."/>
            <person name="Weisshaar B."/>
            <person name="Bailey P.C."/>
        </authorList>
    </citation>
    <scope>GENE FAMILY</scope>
    <scope>NOMENCLATURE</scope>
</reference>
<reference key="7">
    <citation type="journal article" date="2003" name="Plant Cell">
        <title>The Arabidopsis basic/helix-loop-helix transcription factor family.</title>
        <authorList>
            <person name="Toledo-Ortiz G."/>
            <person name="Huq E."/>
            <person name="Quail P.H."/>
        </authorList>
    </citation>
    <scope>GENE FAMILY</scope>
</reference>
<reference key="8">
    <citation type="journal article" date="2003" name="Plant Cell">
        <title>Update on the basic helix-loop-helix transcription factor gene family in Arabidopsis thaliana.</title>
        <authorList>
            <person name="Bailey P.C."/>
            <person name="Martin C."/>
            <person name="Toledo-Ortiz G."/>
            <person name="Quail P.H."/>
            <person name="Huq E."/>
            <person name="Heim M.A."/>
            <person name="Jakoby M."/>
            <person name="Werber M."/>
            <person name="Weisshaar B."/>
        </authorList>
    </citation>
    <scope>GENE FAMILY</scope>
    <scope>NOMENCLATURE</scope>
</reference>
<reference key="9">
    <citation type="journal article" date="2006" name="Proc. Natl. Acad. Sci. U.S.A.">
        <title>Transcriptional and posttranscriptional regulation of transcription factor expression in Arabidopsis roots.</title>
        <authorList>
            <person name="Lee J.-Y."/>
            <person name="Colinas J."/>
            <person name="Wang J.Y."/>
            <person name="Mace D."/>
            <person name="Ohler U."/>
            <person name="Benfey P.N."/>
        </authorList>
    </citation>
    <scope>TISSUE SPECIFICITY</scope>
</reference>
<gene>
    <name type="primary">BHLH103</name>
    <name type="synonym">B70</name>
    <name type="synonym">EN62</name>
    <name type="ordered locus">At4g21340</name>
    <name type="ORF">T6K22.70</name>
</gene>
<organism>
    <name type="scientific">Arabidopsis thaliana</name>
    <name type="common">Mouse-ear cress</name>
    <dbReference type="NCBI Taxonomy" id="3702"/>
    <lineage>
        <taxon>Eukaryota</taxon>
        <taxon>Viridiplantae</taxon>
        <taxon>Streptophyta</taxon>
        <taxon>Embryophyta</taxon>
        <taxon>Tracheophyta</taxon>
        <taxon>Spermatophyta</taxon>
        <taxon>Magnoliopsida</taxon>
        <taxon>eudicotyledons</taxon>
        <taxon>Gunneridae</taxon>
        <taxon>Pentapetalae</taxon>
        <taxon>rosids</taxon>
        <taxon>malvids</taxon>
        <taxon>Brassicales</taxon>
        <taxon>Brassicaceae</taxon>
        <taxon>Camelineae</taxon>
        <taxon>Arabidopsis</taxon>
    </lineage>
</organism>
<name>BH103_ARATH</name>